<protein>
    <recommendedName>
        <fullName evidence="10">Inactive metallocarboxypeptidase ECM14</fullName>
    </recommendedName>
    <alternativeName>
        <fullName evidence="9">Extracellular mutant protein 14</fullName>
    </alternativeName>
</protein>
<feature type="signal peptide" evidence="3">
    <location>
        <begin position="1"/>
        <end position="24"/>
    </location>
</feature>
<feature type="chain" id="PRO_0000004417" description="Inactive metallocarboxypeptidase ECM14">
    <location>
        <begin position="25"/>
        <end position="430"/>
    </location>
</feature>
<feature type="propeptide" id="PRO_0000453255" evidence="11">
    <location>
        <begin position="25"/>
        <end position="105"/>
    </location>
</feature>
<feature type="domain" description="Peptidase M14" evidence="4">
    <location>
        <begin position="120"/>
        <end position="425"/>
    </location>
</feature>
<feature type="binding site" evidence="1">
    <location>
        <begin position="182"/>
        <end position="185"/>
    </location>
    <ligand>
        <name>substrate</name>
    </ligand>
</feature>
<feature type="binding site" evidence="4">
    <location>
        <position position="182"/>
    </location>
    <ligand>
        <name>Zn(2+)</name>
        <dbReference type="ChEBI" id="CHEBI:29105"/>
        <note>catalytic</note>
    </ligand>
</feature>
<feature type="binding site" evidence="4">
    <location>
        <position position="185"/>
    </location>
    <ligand>
        <name>Zn(2+)</name>
        <dbReference type="ChEBI" id="CHEBI:29105"/>
        <note>catalytic</note>
    </ligand>
</feature>
<feature type="binding site" evidence="1">
    <location>
        <position position="240"/>
    </location>
    <ligand>
        <name>substrate</name>
    </ligand>
</feature>
<feature type="binding site" evidence="1">
    <location>
        <begin position="257"/>
        <end position="258"/>
    </location>
    <ligand>
        <name>substrate</name>
    </ligand>
</feature>
<feature type="binding site" evidence="4">
    <location>
        <position position="310"/>
    </location>
    <ligand>
        <name>Zn(2+)</name>
        <dbReference type="ChEBI" id="CHEBI:29105"/>
        <note>catalytic</note>
    </ligand>
</feature>
<feature type="binding site" evidence="1">
    <location>
        <begin position="311"/>
        <end position="312"/>
    </location>
    <ligand>
        <name>substrate</name>
    </ligand>
</feature>
<feature type="glycosylation site" description="N-linked (GlcNAc...) asparagine" evidence="3">
    <location>
        <position position="41"/>
    </location>
</feature>
<feature type="glycosylation site" description="N-linked (GlcNAc...) asparagine" evidence="3">
    <location>
        <position position="295"/>
    </location>
</feature>
<feature type="disulfide bond" evidence="2">
    <location>
        <begin position="251"/>
        <end position="272"/>
    </location>
</feature>
<name>ECM14_YEAST</name>
<organism>
    <name type="scientific">Saccharomyces cerevisiae (strain ATCC 204508 / S288c)</name>
    <name type="common">Baker's yeast</name>
    <dbReference type="NCBI Taxonomy" id="559292"/>
    <lineage>
        <taxon>Eukaryota</taxon>
        <taxon>Fungi</taxon>
        <taxon>Dikarya</taxon>
        <taxon>Ascomycota</taxon>
        <taxon>Saccharomycotina</taxon>
        <taxon>Saccharomycetes</taxon>
        <taxon>Saccharomycetales</taxon>
        <taxon>Saccharomycetaceae</taxon>
        <taxon>Saccharomyces</taxon>
    </lineage>
</organism>
<proteinExistence type="evidence at protein level"/>
<gene>
    <name evidence="9" type="primary">ECM14</name>
    <name evidence="12" type="ordered locus">YHR132C</name>
</gene>
<comment type="function">
    <text evidence="7 8">Inactive carboxypeptidase that may play a role in cell wall organization and biogenesis.</text>
</comment>
<comment type="cofactor">
    <cofactor evidence="1">
        <name>Zn(2+)</name>
        <dbReference type="ChEBI" id="CHEBI:29105"/>
    </cofactor>
    <text evidence="1">Binds 1 zinc ion per subunit.</text>
</comment>
<comment type="subcellular location">
    <subcellularLocation>
        <location evidence="5">Vacuole</location>
    </subcellularLocation>
    <subcellularLocation>
        <location evidence="7">Secreted</location>
    </subcellularLocation>
</comment>
<comment type="PTM">
    <text evidence="7">N-glycosylated.</text>
</comment>
<comment type="disruption phenotype">
    <text evidence="7 8">Growth rate is increased in lithium chloride (PubMed:33256608). Calcofluor White sensitivity is background dependent (PubMed:33256608, PubMed:9335584).</text>
</comment>
<comment type="miscellaneous">
    <text evidence="6">Present with 468 molecules/cell in log phase SD medium.</text>
</comment>
<comment type="similarity">
    <text evidence="10">Belongs to the peptidase M14 family.</text>
</comment>
<comment type="caution">
    <text evidence="7">Lacks the conserved Glu residue in position 391 essential for carbopeptidase activity. The mature form lacks catalytic activity towards synthetic peptide substrates.</text>
</comment>
<dbReference type="EMBL" id="U10398">
    <property type="protein sequence ID" value="AAB68415.1"/>
    <property type="molecule type" value="Genomic_DNA"/>
</dbReference>
<dbReference type="EMBL" id="BK006934">
    <property type="protein sequence ID" value="DAA06824.1"/>
    <property type="molecule type" value="Genomic_DNA"/>
</dbReference>
<dbReference type="PIR" id="S48976">
    <property type="entry name" value="S48976"/>
</dbReference>
<dbReference type="RefSeq" id="NP_012000.1">
    <property type="nucleotide sequence ID" value="NM_001179262.1"/>
</dbReference>
<dbReference type="SMR" id="P38836"/>
<dbReference type="BioGRID" id="36564">
    <property type="interactions" value="81"/>
</dbReference>
<dbReference type="DIP" id="DIP-4615N"/>
<dbReference type="FunCoup" id="P38836">
    <property type="interactions" value="1005"/>
</dbReference>
<dbReference type="IntAct" id="P38836">
    <property type="interactions" value="3"/>
</dbReference>
<dbReference type="STRING" id="4932.YHR132C"/>
<dbReference type="GlyCosmos" id="P38836">
    <property type="glycosylation" value="2 sites, No reported glycans"/>
</dbReference>
<dbReference type="GlyGen" id="P38836">
    <property type="glycosylation" value="2 sites"/>
</dbReference>
<dbReference type="PaxDb" id="4932-YHR132C"/>
<dbReference type="PeptideAtlas" id="P38836"/>
<dbReference type="EnsemblFungi" id="YHR132C_mRNA">
    <property type="protein sequence ID" value="YHR132C"/>
    <property type="gene ID" value="YHR132C"/>
</dbReference>
<dbReference type="GeneID" id="856533"/>
<dbReference type="KEGG" id="sce:YHR132C"/>
<dbReference type="AGR" id="SGD:S000001174"/>
<dbReference type="SGD" id="S000001174">
    <property type="gene designation" value="ECM14"/>
</dbReference>
<dbReference type="VEuPathDB" id="FungiDB:YHR132C"/>
<dbReference type="eggNOG" id="KOG2650">
    <property type="taxonomic scope" value="Eukaryota"/>
</dbReference>
<dbReference type="GeneTree" id="ENSGT00940000165901"/>
<dbReference type="HOGENOM" id="CLU_019326_1_0_1"/>
<dbReference type="InParanoid" id="P38836"/>
<dbReference type="OMA" id="HQHAREH"/>
<dbReference type="OrthoDB" id="3626597at2759"/>
<dbReference type="BioCyc" id="YEAST:G3O-31170-MONOMER"/>
<dbReference type="BioGRID-ORCS" id="856533">
    <property type="hits" value="0 hits in 10 CRISPR screens"/>
</dbReference>
<dbReference type="PRO" id="PR:P38836"/>
<dbReference type="Proteomes" id="UP000002311">
    <property type="component" value="Chromosome VIII"/>
</dbReference>
<dbReference type="RNAct" id="P38836">
    <property type="molecule type" value="protein"/>
</dbReference>
<dbReference type="GO" id="GO:0005615">
    <property type="term" value="C:extracellular space"/>
    <property type="evidence" value="ECO:0000318"/>
    <property type="project" value="GO_Central"/>
</dbReference>
<dbReference type="GO" id="GO:0000324">
    <property type="term" value="C:fungal-type vacuole"/>
    <property type="evidence" value="ECO:0007005"/>
    <property type="project" value="SGD"/>
</dbReference>
<dbReference type="GO" id="GO:0008270">
    <property type="term" value="F:zinc ion binding"/>
    <property type="evidence" value="ECO:0007669"/>
    <property type="project" value="InterPro"/>
</dbReference>
<dbReference type="GO" id="GO:0071555">
    <property type="term" value="P:cell wall organization"/>
    <property type="evidence" value="ECO:0007669"/>
    <property type="project" value="UniProtKB-KW"/>
</dbReference>
<dbReference type="GO" id="GO:0006508">
    <property type="term" value="P:proteolysis"/>
    <property type="evidence" value="ECO:0000250"/>
    <property type="project" value="SGD"/>
</dbReference>
<dbReference type="CDD" id="cd03860">
    <property type="entry name" value="M14_CP_A-B_like"/>
    <property type="match status" value="1"/>
</dbReference>
<dbReference type="FunFam" id="3.40.630.10:FF:000060">
    <property type="entry name" value="Putative metallocarboxypeptidase ecm14"/>
    <property type="match status" value="1"/>
</dbReference>
<dbReference type="Gene3D" id="3.40.630.10">
    <property type="entry name" value="Zn peptidases"/>
    <property type="match status" value="1"/>
</dbReference>
<dbReference type="InterPro" id="IPR000834">
    <property type="entry name" value="Peptidase_M14"/>
</dbReference>
<dbReference type="PANTHER" id="PTHR11705:SF147">
    <property type="entry name" value="INACTIVE METALLOCARBOXYPEPTIDASE ECM14"/>
    <property type="match status" value="1"/>
</dbReference>
<dbReference type="PANTHER" id="PTHR11705">
    <property type="entry name" value="PROTEASE FAMILY M14 CARBOXYPEPTIDASE A,B"/>
    <property type="match status" value="1"/>
</dbReference>
<dbReference type="Pfam" id="PF00246">
    <property type="entry name" value="Peptidase_M14"/>
    <property type="match status" value="1"/>
</dbReference>
<dbReference type="PRINTS" id="PR00765">
    <property type="entry name" value="CRBOXYPTASEA"/>
</dbReference>
<dbReference type="SMART" id="SM00631">
    <property type="entry name" value="Zn_pept"/>
    <property type="match status" value="1"/>
</dbReference>
<dbReference type="SUPFAM" id="SSF53187">
    <property type="entry name" value="Zn-dependent exopeptidases"/>
    <property type="match status" value="1"/>
</dbReference>
<dbReference type="PROSITE" id="PS00132">
    <property type="entry name" value="CARBOXYPEPT_ZN_1"/>
    <property type="match status" value="1"/>
</dbReference>
<dbReference type="PROSITE" id="PS00133">
    <property type="entry name" value="CARBOXYPEPT_ZN_2"/>
    <property type="match status" value="1"/>
</dbReference>
<dbReference type="PROSITE" id="PS52035">
    <property type="entry name" value="PEPTIDASE_M14"/>
    <property type="match status" value="1"/>
</dbReference>
<keyword id="KW-0961">Cell wall biogenesis/degradation</keyword>
<keyword id="KW-1015">Disulfide bond</keyword>
<keyword id="KW-0325">Glycoprotein</keyword>
<keyword id="KW-0479">Metal-binding</keyword>
<keyword id="KW-1185">Reference proteome</keyword>
<keyword id="KW-0964">Secreted</keyword>
<keyword id="KW-0732">Signal</keyword>
<keyword id="KW-0926">Vacuole</keyword>
<keyword id="KW-0862">Zinc</keyword>
<evidence type="ECO:0000250" key="1">
    <source>
        <dbReference type="UniProtKB" id="P00730"/>
    </source>
</evidence>
<evidence type="ECO:0000250" key="2">
    <source>
        <dbReference type="UniProtKB" id="P15085"/>
    </source>
</evidence>
<evidence type="ECO:0000255" key="3"/>
<evidence type="ECO:0000255" key="4">
    <source>
        <dbReference type="PROSITE-ProRule" id="PRU01379"/>
    </source>
</evidence>
<evidence type="ECO:0000269" key="5">
    <source>
    </source>
</evidence>
<evidence type="ECO:0000269" key="6">
    <source>
    </source>
</evidence>
<evidence type="ECO:0000269" key="7">
    <source>
    </source>
</evidence>
<evidence type="ECO:0000269" key="8">
    <source>
    </source>
</evidence>
<evidence type="ECO:0000303" key="9">
    <source>
    </source>
</evidence>
<evidence type="ECO:0000305" key="10"/>
<evidence type="ECO:0000305" key="11">
    <source>
    </source>
</evidence>
<evidence type="ECO:0000312" key="12">
    <source>
        <dbReference type="SGD" id="S000001174"/>
    </source>
</evidence>
<accession>P38836</accession>
<accession>D3DL80</accession>
<sequence length="430" mass="49829">MLHMNSLWGCFLFVLLAVTGAVQGLQEDYSEYAVYRFTSDNYSTLVRDVIAPLTDDYDVWTRSNNFIDIKLPKEIGEQINDGQVIIDNMNELIQNTLPTSQMMAREQAVFENDYDFFFNEYRDLDTIYMWLDLLERSFPSLVAVEHLGRTFEGRELKALHISGNKPESNPEKKTIVITGGIHAREWISVSTVCWALYQLLNRYGSSKKETKYLDDLDFLVIPVFNPDGYAYTWSHDRLWRKNRQRTHVPQCLGIDIDHSFGFQWEKAHTHACSEEYSGETPFEAWEASAWYKYINETKGDYKIYGYIDMHSYSQEILYPYAYSCDALPRDLENLLELSYGLSKAIRSKSGRNYDVISACKDRGSDIFPGLGAGSALDFMYHHRAHWAFQLKLRDTGNHGFLLPPENIKPVGKETYAALKYFCDFLLDPEI</sequence>
<reference key="1">
    <citation type="journal article" date="1994" name="Science">
        <title>Complete nucleotide sequence of Saccharomyces cerevisiae chromosome VIII.</title>
        <authorList>
            <person name="Johnston M."/>
            <person name="Andrews S."/>
            <person name="Brinkman R."/>
            <person name="Cooper J."/>
            <person name="Ding H."/>
            <person name="Dover J."/>
            <person name="Du Z."/>
            <person name="Favello A."/>
            <person name="Fulton L."/>
            <person name="Gattung S."/>
            <person name="Geisel C."/>
            <person name="Kirsten J."/>
            <person name="Kucaba T."/>
            <person name="Hillier L.W."/>
            <person name="Jier M."/>
            <person name="Johnston L."/>
            <person name="Langston Y."/>
            <person name="Latreille P."/>
            <person name="Louis E.J."/>
            <person name="Macri C."/>
            <person name="Mardis E."/>
            <person name="Menezes S."/>
            <person name="Mouser L."/>
            <person name="Nhan M."/>
            <person name="Rifkin L."/>
            <person name="Riles L."/>
            <person name="St Peter H."/>
            <person name="Trevaskis E."/>
            <person name="Vaughan K."/>
            <person name="Vignati D."/>
            <person name="Wilcox L."/>
            <person name="Wohldman P."/>
            <person name="Waterston R."/>
            <person name="Wilson R."/>
            <person name="Vaudin M."/>
        </authorList>
    </citation>
    <scope>NUCLEOTIDE SEQUENCE [LARGE SCALE GENOMIC DNA]</scope>
    <source>
        <strain>ATCC 204508 / S288c</strain>
    </source>
</reference>
<reference key="2">
    <citation type="journal article" date="2014" name="G3 (Bethesda)">
        <title>The reference genome sequence of Saccharomyces cerevisiae: Then and now.</title>
        <authorList>
            <person name="Engel S.R."/>
            <person name="Dietrich F.S."/>
            <person name="Fisk D.G."/>
            <person name="Binkley G."/>
            <person name="Balakrishnan R."/>
            <person name="Costanzo M.C."/>
            <person name="Dwight S.S."/>
            <person name="Hitz B.C."/>
            <person name="Karra K."/>
            <person name="Nash R.S."/>
            <person name="Weng S."/>
            <person name="Wong E.D."/>
            <person name="Lloyd P."/>
            <person name="Skrzypek M.S."/>
            <person name="Miyasato S.R."/>
            <person name="Simison M."/>
            <person name="Cherry J.M."/>
        </authorList>
    </citation>
    <scope>GENOME REANNOTATION</scope>
    <source>
        <strain>ATCC 204508 / S288c</strain>
    </source>
</reference>
<reference key="3">
    <citation type="journal article" date="1997" name="Genetics">
        <title>Large scale identification of genes involved in cell surface biosynthesis and architecture in Saccharomyces cerevisiae.</title>
        <authorList>
            <person name="Lussier M."/>
            <person name="White A.-M."/>
            <person name="Sheraton J."/>
            <person name="di Paolo T."/>
            <person name="Treadwell J."/>
            <person name="Southard S.B."/>
            <person name="Horenstein C.I."/>
            <person name="Chen-Weiner J."/>
            <person name="Ram A.F.J."/>
            <person name="Kapteyn J.C."/>
            <person name="Roemer T.W."/>
            <person name="Vo D.H."/>
            <person name="Bondoc D.C."/>
            <person name="Hall J."/>
            <person name="Zhong W.-W."/>
            <person name="Sdicu A.-M."/>
            <person name="Davies J."/>
            <person name="Klis F.M."/>
            <person name="Robbins P.W."/>
            <person name="Bussey H."/>
        </authorList>
    </citation>
    <scope>IDENTIFICATION</scope>
    <scope>DISRUPTION PHENOTYPE</scope>
</reference>
<reference key="4">
    <citation type="journal article" date="2003" name="Nature">
        <title>Global analysis of protein localization in budding yeast.</title>
        <authorList>
            <person name="Huh W.-K."/>
            <person name="Falvo J.V."/>
            <person name="Gerke L.C."/>
            <person name="Carroll A.S."/>
            <person name="Howson R.W."/>
            <person name="Weissman J.S."/>
            <person name="O'Shea E.K."/>
        </authorList>
    </citation>
    <scope>SUBCELLULAR LOCATION [LARGE SCALE ANALYSIS]</scope>
</reference>
<reference key="5">
    <citation type="journal article" date="2003" name="Nature">
        <title>Global analysis of protein expression in yeast.</title>
        <authorList>
            <person name="Ghaemmaghami S."/>
            <person name="Huh W.-K."/>
            <person name="Bower K."/>
            <person name="Howson R.W."/>
            <person name="Belle A."/>
            <person name="Dephoure N."/>
            <person name="O'Shea E.K."/>
            <person name="Weissman J.S."/>
        </authorList>
    </citation>
    <scope>LEVEL OF PROTEIN EXPRESSION [LARGE SCALE ANALYSIS]</scope>
</reference>
<reference key="6">
    <citation type="journal article" date="2020" name="BMC Mol. Biol.">
        <title>Biochemical and genetic analysis of Ecm14, a conserved fungal pseudopeptidase.</title>
        <authorList>
            <person name="McDonald R.C."/>
            <person name="Schott M.J."/>
            <person name="Idowu T.A."/>
            <person name="Lyons P.J."/>
        </authorList>
    </citation>
    <scope>FUNCTION</scope>
    <scope>LACK OF CATALYTIC ACTIVITY</scope>
    <scope>SUBCELLULAR LOCATION</scope>
    <scope>GLYCOSYLATION</scope>
    <scope>DISRUPTION PHENOTYPE</scope>
    <scope>PROTEOLYTIC CLEAVAGE</scope>
</reference>